<reference key="1">
    <citation type="journal article" date="2004" name="FEMS Microbiol. Lett.">
        <title>The non-photosynthetic, pathogenic green alga Helicosporidium sp. has retained a modified, functional plastid genome.</title>
        <authorList>
            <person name="Tartar A."/>
            <person name="Boucias D.G."/>
        </authorList>
    </citation>
    <scope>NUCLEOTIDE SEQUENCE [GENOMIC DNA]</scope>
</reference>
<reference key="2">
    <citation type="journal article" date="2006" name="BMC Biol.">
        <title>The complete plastid genome sequence of the parasitic green alga, Helicosporidium sp. is highly reduced and structured.</title>
        <authorList>
            <person name="de Koning A.P."/>
            <person name="Keeling P.J."/>
        </authorList>
    </citation>
    <scope>NUCLEOTIDE SEQUENCE [LARGE SCALE GENOMIC DNA]</scope>
</reference>
<geneLocation type="non-photosynthetic plastid"/>
<gene>
    <name type="primary">rps7</name>
</gene>
<name>RR7_HELSJ</name>
<keyword id="KW-0934">Plastid</keyword>
<keyword id="KW-0687">Ribonucleoprotein</keyword>
<keyword id="KW-0689">Ribosomal protein</keyword>
<keyword id="KW-0694">RNA-binding</keyword>
<keyword id="KW-0699">rRNA-binding</keyword>
<feature type="chain" id="PRO_0000309005" description="Small ribosomal subunit protein uS7c">
    <location>
        <begin position="1"/>
        <end position="153"/>
    </location>
</feature>
<proteinExistence type="inferred from homology"/>
<comment type="function">
    <text evidence="1">One of the primary rRNA binding proteins, it binds directly to 16S rRNA where it nucleates assembly of the head domain of the 30S subunit.</text>
</comment>
<comment type="subunit">
    <text>Part of the 30S ribosomal subunit.</text>
</comment>
<comment type="subcellular location">
    <subcellularLocation>
        <location>Plastid</location>
    </subcellularLocation>
</comment>
<comment type="similarity">
    <text evidence="2">Belongs to the universal ribosomal protein uS7 family.</text>
</comment>
<evidence type="ECO:0000250" key="1"/>
<evidence type="ECO:0000305" key="2"/>
<accession>Q6RH25</accession>
<sequence length="153" mass="17903">MKNLIKNKIKLSTYNITLIEHFIRFLIKGWKKKKAINLLSLSLNYIALTINKDPISTLEMAVRYTIPVYLEVTPSIITNENKTLWHKRFICKSSKVRTFQAIKWIIKAAKEKKDKSLYIHLAKEIVDASRNSGKAVKYKEQMENKLKLAQLHM</sequence>
<protein>
    <recommendedName>
        <fullName evidence="2">Small ribosomal subunit protein uS7c</fullName>
    </recommendedName>
    <alternativeName>
        <fullName>30S ribosomal protein S7, plastid</fullName>
    </alternativeName>
</protein>
<dbReference type="EMBL" id="AY498714">
    <property type="protein sequence ID" value="AAS21039.1"/>
    <property type="molecule type" value="Genomic_DNA"/>
</dbReference>
<dbReference type="EMBL" id="DQ398104">
    <property type="protein sequence ID" value="ABD33986.1"/>
    <property type="molecule type" value="Genomic_DNA"/>
</dbReference>
<dbReference type="RefSeq" id="YP_635938.1">
    <property type="nucleotide sequence ID" value="NC_008100.1"/>
</dbReference>
<dbReference type="SMR" id="Q6RH25"/>
<dbReference type="GeneID" id="4100449"/>
<dbReference type="GO" id="GO:0009536">
    <property type="term" value="C:plastid"/>
    <property type="evidence" value="ECO:0007669"/>
    <property type="project" value="UniProtKB-SubCell"/>
</dbReference>
<dbReference type="GO" id="GO:1990904">
    <property type="term" value="C:ribonucleoprotein complex"/>
    <property type="evidence" value="ECO:0007669"/>
    <property type="project" value="UniProtKB-KW"/>
</dbReference>
<dbReference type="GO" id="GO:0005840">
    <property type="term" value="C:ribosome"/>
    <property type="evidence" value="ECO:0007669"/>
    <property type="project" value="UniProtKB-KW"/>
</dbReference>
<dbReference type="GO" id="GO:0019843">
    <property type="term" value="F:rRNA binding"/>
    <property type="evidence" value="ECO:0007669"/>
    <property type="project" value="UniProtKB-KW"/>
</dbReference>
<dbReference type="GO" id="GO:0006412">
    <property type="term" value="P:translation"/>
    <property type="evidence" value="ECO:0007669"/>
    <property type="project" value="InterPro"/>
</dbReference>
<dbReference type="Gene3D" id="1.10.455.10">
    <property type="entry name" value="Ribosomal protein S7 domain"/>
    <property type="match status" value="1"/>
</dbReference>
<dbReference type="InterPro" id="IPR000235">
    <property type="entry name" value="Ribosomal_uS7"/>
</dbReference>
<dbReference type="InterPro" id="IPR023798">
    <property type="entry name" value="Ribosomal_uS7_dom"/>
</dbReference>
<dbReference type="InterPro" id="IPR036823">
    <property type="entry name" value="Ribosomal_uS7_dom_sf"/>
</dbReference>
<dbReference type="Pfam" id="PF00177">
    <property type="entry name" value="Ribosomal_S7"/>
    <property type="match status" value="1"/>
</dbReference>
<dbReference type="PIRSF" id="PIRSF002122">
    <property type="entry name" value="RPS7p_RPS7a_RPS5e_RPS7o"/>
    <property type="match status" value="1"/>
</dbReference>
<dbReference type="SUPFAM" id="SSF47973">
    <property type="entry name" value="Ribosomal protein S7"/>
    <property type="match status" value="1"/>
</dbReference>
<organism>
    <name type="scientific">Helicosporidium sp. subsp. Simulium jonesii</name>
    <name type="common">Green alga</name>
    <dbReference type="NCBI Taxonomy" id="145475"/>
    <lineage>
        <taxon>Eukaryota</taxon>
        <taxon>Viridiplantae</taxon>
        <taxon>Chlorophyta</taxon>
        <taxon>core chlorophytes</taxon>
        <taxon>Trebouxiophyceae</taxon>
        <taxon>Chlorellales</taxon>
        <taxon>Chlorellaceae</taxon>
        <taxon>Helicosporidium</taxon>
    </lineage>
</organism>